<comment type="similarity">
    <text evidence="2">To M.jannaschii MJ0547 and MJ0169.</text>
</comment>
<dbReference type="EMBL" id="L77117">
    <property type="protein sequence ID" value="AAB98928.1"/>
    <property type="molecule type" value="Genomic_DNA"/>
</dbReference>
<dbReference type="PIR" id="D64415">
    <property type="entry name" value="D64415"/>
</dbReference>
<dbReference type="SMR" id="Q58334"/>
<dbReference type="STRING" id="243232.MJ_0924"/>
<dbReference type="PaxDb" id="243232-MJ_0924"/>
<dbReference type="EnsemblBacteria" id="AAB98928">
    <property type="protein sequence ID" value="AAB98928"/>
    <property type="gene ID" value="MJ_0924"/>
</dbReference>
<dbReference type="KEGG" id="mja:MJ_0924"/>
<dbReference type="eggNOG" id="arCOG00589">
    <property type="taxonomic scope" value="Archaea"/>
</dbReference>
<dbReference type="HOGENOM" id="CLU_1154355_0_0_2"/>
<dbReference type="InParanoid" id="Q58334"/>
<dbReference type="PhylomeDB" id="Q58334"/>
<dbReference type="Proteomes" id="UP000000805">
    <property type="component" value="Chromosome"/>
</dbReference>
<dbReference type="GO" id="GO:0009898">
    <property type="term" value="C:cytoplasmic side of plasma membrane"/>
    <property type="evidence" value="ECO:0000318"/>
    <property type="project" value="GO_Central"/>
</dbReference>
<dbReference type="GO" id="GO:0005829">
    <property type="term" value="C:cytosol"/>
    <property type="evidence" value="ECO:0000318"/>
    <property type="project" value="GO_Central"/>
</dbReference>
<dbReference type="GO" id="GO:0005524">
    <property type="term" value="F:ATP binding"/>
    <property type="evidence" value="ECO:0000318"/>
    <property type="project" value="GO_Central"/>
</dbReference>
<dbReference type="GO" id="GO:0016887">
    <property type="term" value="F:ATP hydrolysis activity"/>
    <property type="evidence" value="ECO:0000318"/>
    <property type="project" value="GO_Central"/>
</dbReference>
<dbReference type="Gene3D" id="3.40.50.300">
    <property type="entry name" value="P-loop containing nucleotide triphosphate hydrolases"/>
    <property type="match status" value="1"/>
</dbReference>
<dbReference type="InterPro" id="IPR025669">
    <property type="entry name" value="AAA_dom"/>
</dbReference>
<dbReference type="InterPro" id="IPR027417">
    <property type="entry name" value="P-loop_NTPase"/>
</dbReference>
<dbReference type="InterPro" id="IPR050625">
    <property type="entry name" value="ParA/MinD_ATPase"/>
</dbReference>
<dbReference type="PANTHER" id="PTHR43384:SF10">
    <property type="entry name" value="ATPASE INVOLVED IN CHROMOSOME PARTITIONING, PARA_MIND FAMILY"/>
    <property type="match status" value="1"/>
</dbReference>
<dbReference type="PANTHER" id="PTHR43384">
    <property type="entry name" value="SEPTUM SITE-DETERMINING PROTEIN MIND HOMOLOG, CHLOROPLASTIC-RELATED"/>
    <property type="match status" value="1"/>
</dbReference>
<dbReference type="Pfam" id="PF13614">
    <property type="entry name" value="AAA_31"/>
    <property type="match status" value="1"/>
</dbReference>
<dbReference type="SUPFAM" id="SSF52540">
    <property type="entry name" value="P-loop containing nucleoside triphosphate hydrolases"/>
    <property type="match status" value="1"/>
</dbReference>
<organism>
    <name type="scientific">Methanocaldococcus jannaschii (strain ATCC 43067 / DSM 2661 / JAL-1 / JCM 10045 / NBRC 100440)</name>
    <name type="common">Methanococcus jannaschii</name>
    <dbReference type="NCBI Taxonomy" id="243232"/>
    <lineage>
        <taxon>Archaea</taxon>
        <taxon>Methanobacteriati</taxon>
        <taxon>Methanobacteriota</taxon>
        <taxon>Methanomada group</taxon>
        <taxon>Methanococci</taxon>
        <taxon>Methanococcales</taxon>
        <taxon>Methanocaldococcaceae</taxon>
        <taxon>Methanocaldococcus</taxon>
    </lineage>
</organism>
<evidence type="ECO:0000255" key="1"/>
<evidence type="ECO:0000305" key="2"/>
<name>Y924_METJA</name>
<proteinExistence type="predicted"/>
<accession>Q58334</accession>
<sequence length="263" mass="29130">MDYRWIQMKVITFSIAKGGTGKTIITANAAAALAKKGKKILLIDGDVGSKSLSHLLNVKSNIFLADIIEEERPIKDAIVNTPIENIELLAVGKSLADYLKFDINILKRFKELGDYDYVFIDAPSTSSGVETYLALGLSDYFIPVLDYTAFGPSLQGAINTIVIGKNYLESTPAGFIINKAEDLPESVINDIKKILGLECISIIHKNSLVEQSYAKKEIVYLTSSDKKFVEEIDKIVDALEKLKEVKERDIPKVIEKIKESTLL</sequence>
<gene>
    <name type="ordered locus">MJ0924</name>
</gene>
<feature type="chain" id="PRO_0000107109" description="Uncharacterized ATP-binding protein MJ0924">
    <location>
        <begin position="1"/>
        <end position="263"/>
    </location>
</feature>
<feature type="binding site" evidence="1">
    <location>
        <begin position="16"/>
        <end position="23"/>
    </location>
    <ligand>
        <name>ATP</name>
        <dbReference type="ChEBI" id="CHEBI:30616"/>
    </ligand>
</feature>
<reference key="1">
    <citation type="journal article" date="1996" name="Science">
        <title>Complete genome sequence of the methanogenic archaeon, Methanococcus jannaschii.</title>
        <authorList>
            <person name="Bult C.J."/>
            <person name="White O."/>
            <person name="Olsen G.J."/>
            <person name="Zhou L."/>
            <person name="Fleischmann R.D."/>
            <person name="Sutton G.G."/>
            <person name="Blake J.A."/>
            <person name="FitzGerald L.M."/>
            <person name="Clayton R.A."/>
            <person name="Gocayne J.D."/>
            <person name="Kerlavage A.R."/>
            <person name="Dougherty B.A."/>
            <person name="Tomb J.-F."/>
            <person name="Adams M.D."/>
            <person name="Reich C.I."/>
            <person name="Overbeek R."/>
            <person name="Kirkness E.F."/>
            <person name="Weinstock K.G."/>
            <person name="Merrick J.M."/>
            <person name="Glodek A."/>
            <person name="Scott J.L."/>
            <person name="Geoghagen N.S.M."/>
            <person name="Weidman J.F."/>
            <person name="Fuhrmann J.L."/>
            <person name="Nguyen D."/>
            <person name="Utterback T.R."/>
            <person name="Kelley J.M."/>
            <person name="Peterson J.D."/>
            <person name="Sadow P.W."/>
            <person name="Hanna M.C."/>
            <person name="Cotton M.D."/>
            <person name="Roberts K.M."/>
            <person name="Hurst M.A."/>
            <person name="Kaine B.P."/>
            <person name="Borodovsky M."/>
            <person name="Klenk H.-P."/>
            <person name="Fraser C.M."/>
            <person name="Smith H.O."/>
            <person name="Woese C.R."/>
            <person name="Venter J.C."/>
        </authorList>
    </citation>
    <scope>NUCLEOTIDE SEQUENCE [LARGE SCALE GENOMIC DNA]</scope>
    <source>
        <strain>ATCC 43067 / DSM 2661 / JAL-1 / JCM 10045 / NBRC 100440</strain>
    </source>
</reference>
<protein>
    <recommendedName>
        <fullName>Uncharacterized ATP-binding protein MJ0924</fullName>
    </recommendedName>
</protein>
<keyword id="KW-0067">ATP-binding</keyword>
<keyword id="KW-0547">Nucleotide-binding</keyword>
<keyword id="KW-1185">Reference proteome</keyword>